<protein>
    <recommendedName>
        <fullName evidence="1">Ribosome maturation factor RimP</fullName>
    </recommendedName>
</protein>
<dbReference type="EMBL" id="AL513382">
    <property type="protein sequence ID" value="CAD07808.1"/>
    <property type="status" value="ALT_INIT"/>
    <property type="molecule type" value="Genomic_DNA"/>
</dbReference>
<dbReference type="EMBL" id="AE014613">
    <property type="protein sequence ID" value="AAO70744.1"/>
    <property type="status" value="ALT_INIT"/>
    <property type="molecule type" value="Genomic_DNA"/>
</dbReference>
<dbReference type="RefSeq" id="NP_457670.3">
    <property type="nucleotide sequence ID" value="NC_003198.1"/>
</dbReference>
<dbReference type="SMR" id="P67219"/>
<dbReference type="STRING" id="220341.gene:17587319"/>
<dbReference type="KEGG" id="stt:t3206"/>
<dbReference type="KEGG" id="sty:STY3469"/>
<dbReference type="PATRIC" id="fig|220341.7.peg.3531"/>
<dbReference type="eggNOG" id="COG0779">
    <property type="taxonomic scope" value="Bacteria"/>
</dbReference>
<dbReference type="HOGENOM" id="CLU_070525_1_1_6"/>
<dbReference type="OMA" id="YIHVSLY"/>
<dbReference type="Proteomes" id="UP000000541">
    <property type="component" value="Chromosome"/>
</dbReference>
<dbReference type="Proteomes" id="UP000002670">
    <property type="component" value="Chromosome"/>
</dbReference>
<dbReference type="GO" id="GO:0005829">
    <property type="term" value="C:cytosol"/>
    <property type="evidence" value="ECO:0007669"/>
    <property type="project" value="TreeGrafter"/>
</dbReference>
<dbReference type="GO" id="GO:0000028">
    <property type="term" value="P:ribosomal small subunit assembly"/>
    <property type="evidence" value="ECO:0007669"/>
    <property type="project" value="TreeGrafter"/>
</dbReference>
<dbReference type="GO" id="GO:0006412">
    <property type="term" value="P:translation"/>
    <property type="evidence" value="ECO:0007669"/>
    <property type="project" value="TreeGrafter"/>
</dbReference>
<dbReference type="CDD" id="cd01734">
    <property type="entry name" value="YlxS_C"/>
    <property type="match status" value="1"/>
</dbReference>
<dbReference type="FunFam" id="2.30.30.180:FF:000001">
    <property type="entry name" value="Ribosome maturation factor RimP"/>
    <property type="match status" value="1"/>
</dbReference>
<dbReference type="FunFam" id="3.30.300.70:FF:000001">
    <property type="entry name" value="Ribosome maturation factor RimP"/>
    <property type="match status" value="1"/>
</dbReference>
<dbReference type="Gene3D" id="2.30.30.180">
    <property type="entry name" value="Ribosome maturation factor RimP, C-terminal domain"/>
    <property type="match status" value="1"/>
</dbReference>
<dbReference type="Gene3D" id="3.30.300.70">
    <property type="entry name" value="RimP-like superfamily, N-terminal"/>
    <property type="match status" value="1"/>
</dbReference>
<dbReference type="HAMAP" id="MF_01077">
    <property type="entry name" value="RimP"/>
    <property type="match status" value="1"/>
</dbReference>
<dbReference type="InterPro" id="IPR003728">
    <property type="entry name" value="Ribosome_maturation_RimP"/>
</dbReference>
<dbReference type="InterPro" id="IPR028998">
    <property type="entry name" value="RimP_C"/>
</dbReference>
<dbReference type="InterPro" id="IPR036847">
    <property type="entry name" value="RimP_C_sf"/>
</dbReference>
<dbReference type="InterPro" id="IPR028989">
    <property type="entry name" value="RimP_N"/>
</dbReference>
<dbReference type="InterPro" id="IPR035956">
    <property type="entry name" value="RimP_N_sf"/>
</dbReference>
<dbReference type="NCBIfam" id="NF000927">
    <property type="entry name" value="PRK00092.1-1"/>
    <property type="match status" value="1"/>
</dbReference>
<dbReference type="PANTHER" id="PTHR33867">
    <property type="entry name" value="RIBOSOME MATURATION FACTOR RIMP"/>
    <property type="match status" value="1"/>
</dbReference>
<dbReference type="PANTHER" id="PTHR33867:SF1">
    <property type="entry name" value="RIBOSOME MATURATION FACTOR RIMP"/>
    <property type="match status" value="1"/>
</dbReference>
<dbReference type="Pfam" id="PF17384">
    <property type="entry name" value="DUF150_C"/>
    <property type="match status" value="1"/>
</dbReference>
<dbReference type="Pfam" id="PF02576">
    <property type="entry name" value="RimP_N"/>
    <property type="match status" value="1"/>
</dbReference>
<dbReference type="SUPFAM" id="SSF74942">
    <property type="entry name" value="YhbC-like, C-terminal domain"/>
    <property type="match status" value="1"/>
</dbReference>
<dbReference type="SUPFAM" id="SSF75420">
    <property type="entry name" value="YhbC-like, N-terminal domain"/>
    <property type="match status" value="1"/>
</dbReference>
<accession>P67219</accession>
<accession>Q8XFC7</accession>
<sequence length="152" mass="16840">MGLSTLEQKLTEMITAPVEALGYELVGIEFIRGRTSTLRIYIDSEDGINVDDCADVSHQVSAVLDVEDPISVAYNLEVSSPGLDRPMFTADHYARFQGEEVALVLRMAVQNRRKWQGIIKAVDGEMITVTVEGKDEVFALSNIQKANLVPHF</sequence>
<organism>
    <name type="scientific">Salmonella typhi</name>
    <dbReference type="NCBI Taxonomy" id="90370"/>
    <lineage>
        <taxon>Bacteria</taxon>
        <taxon>Pseudomonadati</taxon>
        <taxon>Pseudomonadota</taxon>
        <taxon>Gammaproteobacteria</taxon>
        <taxon>Enterobacterales</taxon>
        <taxon>Enterobacteriaceae</taxon>
        <taxon>Salmonella</taxon>
    </lineage>
</organism>
<keyword id="KW-0963">Cytoplasm</keyword>
<keyword id="KW-0690">Ribosome biogenesis</keyword>
<feature type="chain" id="PRO_0000181916" description="Ribosome maturation factor RimP">
    <location>
        <begin position="1"/>
        <end position="152"/>
    </location>
</feature>
<reference key="1">
    <citation type="journal article" date="2001" name="Nature">
        <title>Complete genome sequence of a multiple drug resistant Salmonella enterica serovar Typhi CT18.</title>
        <authorList>
            <person name="Parkhill J."/>
            <person name="Dougan G."/>
            <person name="James K.D."/>
            <person name="Thomson N.R."/>
            <person name="Pickard D."/>
            <person name="Wain J."/>
            <person name="Churcher C.M."/>
            <person name="Mungall K.L."/>
            <person name="Bentley S.D."/>
            <person name="Holden M.T.G."/>
            <person name="Sebaihia M."/>
            <person name="Baker S."/>
            <person name="Basham D."/>
            <person name="Brooks K."/>
            <person name="Chillingworth T."/>
            <person name="Connerton P."/>
            <person name="Cronin A."/>
            <person name="Davis P."/>
            <person name="Davies R.M."/>
            <person name="Dowd L."/>
            <person name="White N."/>
            <person name="Farrar J."/>
            <person name="Feltwell T."/>
            <person name="Hamlin N."/>
            <person name="Haque A."/>
            <person name="Hien T.T."/>
            <person name="Holroyd S."/>
            <person name="Jagels K."/>
            <person name="Krogh A."/>
            <person name="Larsen T.S."/>
            <person name="Leather S."/>
            <person name="Moule S."/>
            <person name="O'Gaora P."/>
            <person name="Parry C."/>
            <person name="Quail M.A."/>
            <person name="Rutherford K.M."/>
            <person name="Simmonds M."/>
            <person name="Skelton J."/>
            <person name="Stevens K."/>
            <person name="Whitehead S."/>
            <person name="Barrell B.G."/>
        </authorList>
    </citation>
    <scope>NUCLEOTIDE SEQUENCE [LARGE SCALE GENOMIC DNA]</scope>
    <source>
        <strain>CT18</strain>
    </source>
</reference>
<reference key="2">
    <citation type="journal article" date="2003" name="J. Bacteriol.">
        <title>Comparative genomics of Salmonella enterica serovar Typhi strains Ty2 and CT18.</title>
        <authorList>
            <person name="Deng W."/>
            <person name="Liou S.-R."/>
            <person name="Plunkett G. III"/>
            <person name="Mayhew G.F."/>
            <person name="Rose D.J."/>
            <person name="Burland V."/>
            <person name="Kodoyianni V."/>
            <person name="Schwartz D.C."/>
            <person name="Blattner F.R."/>
        </authorList>
    </citation>
    <scope>NUCLEOTIDE SEQUENCE [LARGE SCALE GENOMIC DNA]</scope>
    <source>
        <strain>ATCC 700931 / Ty2</strain>
    </source>
</reference>
<evidence type="ECO:0000255" key="1">
    <source>
        <dbReference type="HAMAP-Rule" id="MF_01077"/>
    </source>
</evidence>
<evidence type="ECO:0000305" key="2"/>
<comment type="function">
    <text evidence="1">Required for maturation of 30S ribosomal subunits.</text>
</comment>
<comment type="subcellular location">
    <subcellularLocation>
        <location evidence="1">Cytoplasm</location>
    </subcellularLocation>
</comment>
<comment type="similarity">
    <text evidence="1">Belongs to the RimP family.</text>
</comment>
<comment type="sequence caution" evidence="2">
    <conflict type="erroneous initiation">
        <sequence resource="EMBL-CDS" id="AAO70744"/>
    </conflict>
</comment>
<comment type="sequence caution" evidence="2">
    <conflict type="erroneous initiation">
        <sequence resource="EMBL-CDS" id="CAD07808"/>
    </conflict>
</comment>
<proteinExistence type="inferred from homology"/>
<name>RIMP_SALTI</name>
<gene>
    <name evidence="1" type="primary">rimP</name>
    <name type="ordered locus">STY3469</name>
    <name type="ordered locus">t3206</name>
</gene>